<keyword id="KW-1185">Reference proteome</keyword>
<keyword id="KW-0687">Ribonucleoprotein</keyword>
<keyword id="KW-0689">Ribosomal protein</keyword>
<keyword id="KW-0694">RNA-binding</keyword>
<keyword id="KW-0699">rRNA-binding</keyword>
<proteinExistence type="inferred from homology"/>
<evidence type="ECO:0000255" key="1">
    <source>
        <dbReference type="HAMAP-Rule" id="MF_01331"/>
    </source>
</evidence>
<evidence type="ECO:0000305" key="2"/>
<gene>
    <name evidence="1" type="primary">rplV</name>
    <name type="ordered locus">Cpha266_2418</name>
</gene>
<reference key="1">
    <citation type="submission" date="2006-12" db="EMBL/GenBank/DDBJ databases">
        <title>Complete sequence of Chlorobium phaeobacteroides DSM 266.</title>
        <authorList>
            <consortium name="US DOE Joint Genome Institute"/>
            <person name="Copeland A."/>
            <person name="Lucas S."/>
            <person name="Lapidus A."/>
            <person name="Barry K."/>
            <person name="Detter J.C."/>
            <person name="Glavina del Rio T."/>
            <person name="Hammon N."/>
            <person name="Israni S."/>
            <person name="Pitluck S."/>
            <person name="Goltsman E."/>
            <person name="Schmutz J."/>
            <person name="Larimer F."/>
            <person name="Land M."/>
            <person name="Hauser L."/>
            <person name="Mikhailova N."/>
            <person name="Li T."/>
            <person name="Overmann J."/>
            <person name="Bryant D.A."/>
            <person name="Richardson P."/>
        </authorList>
    </citation>
    <scope>NUCLEOTIDE SEQUENCE [LARGE SCALE GENOMIC DNA]</scope>
    <source>
        <strain>DSM 266 / SMG 266 / 2430</strain>
    </source>
</reference>
<accession>A1BJ29</accession>
<feature type="chain" id="PRO_0000354457" description="Large ribosomal subunit protein uL22">
    <location>
        <begin position="1"/>
        <end position="119"/>
    </location>
</feature>
<sequence>MQAKAILRHTPTSPRKMRLVAGLVRGKQVDLAKAILLNSTKSASRNVMMTLKSAVSNYALINPDERVSDQELFIKAVYVDQGATLKRTLPAPMGRAFRIRKRSNHLTIIVDKVKNPVTK</sequence>
<organism>
    <name type="scientific">Chlorobium phaeobacteroides (strain DSM 266 / SMG 266 / 2430)</name>
    <dbReference type="NCBI Taxonomy" id="290317"/>
    <lineage>
        <taxon>Bacteria</taxon>
        <taxon>Pseudomonadati</taxon>
        <taxon>Chlorobiota</taxon>
        <taxon>Chlorobiia</taxon>
        <taxon>Chlorobiales</taxon>
        <taxon>Chlorobiaceae</taxon>
        <taxon>Chlorobium/Pelodictyon group</taxon>
        <taxon>Chlorobium</taxon>
    </lineage>
</organism>
<dbReference type="EMBL" id="CP000492">
    <property type="protein sequence ID" value="ABL66406.1"/>
    <property type="molecule type" value="Genomic_DNA"/>
</dbReference>
<dbReference type="RefSeq" id="WP_011746188.1">
    <property type="nucleotide sequence ID" value="NC_008639.1"/>
</dbReference>
<dbReference type="SMR" id="A1BJ29"/>
<dbReference type="STRING" id="290317.Cpha266_2418"/>
<dbReference type="KEGG" id="cph:Cpha266_2418"/>
<dbReference type="eggNOG" id="COG0091">
    <property type="taxonomic scope" value="Bacteria"/>
</dbReference>
<dbReference type="HOGENOM" id="CLU_083987_3_1_10"/>
<dbReference type="OrthoDB" id="9805969at2"/>
<dbReference type="Proteomes" id="UP000008701">
    <property type="component" value="Chromosome"/>
</dbReference>
<dbReference type="GO" id="GO:0022625">
    <property type="term" value="C:cytosolic large ribosomal subunit"/>
    <property type="evidence" value="ECO:0007669"/>
    <property type="project" value="TreeGrafter"/>
</dbReference>
<dbReference type="GO" id="GO:0019843">
    <property type="term" value="F:rRNA binding"/>
    <property type="evidence" value="ECO:0007669"/>
    <property type="project" value="UniProtKB-UniRule"/>
</dbReference>
<dbReference type="GO" id="GO:0003735">
    <property type="term" value="F:structural constituent of ribosome"/>
    <property type="evidence" value="ECO:0007669"/>
    <property type="project" value="InterPro"/>
</dbReference>
<dbReference type="GO" id="GO:0006412">
    <property type="term" value="P:translation"/>
    <property type="evidence" value="ECO:0007669"/>
    <property type="project" value="UniProtKB-UniRule"/>
</dbReference>
<dbReference type="CDD" id="cd00336">
    <property type="entry name" value="Ribosomal_L22"/>
    <property type="match status" value="1"/>
</dbReference>
<dbReference type="Gene3D" id="3.90.470.10">
    <property type="entry name" value="Ribosomal protein L22/L17"/>
    <property type="match status" value="1"/>
</dbReference>
<dbReference type="HAMAP" id="MF_01331_B">
    <property type="entry name" value="Ribosomal_uL22_B"/>
    <property type="match status" value="1"/>
</dbReference>
<dbReference type="InterPro" id="IPR001063">
    <property type="entry name" value="Ribosomal_uL22"/>
</dbReference>
<dbReference type="InterPro" id="IPR005727">
    <property type="entry name" value="Ribosomal_uL22_bac/chlpt-type"/>
</dbReference>
<dbReference type="InterPro" id="IPR047867">
    <property type="entry name" value="Ribosomal_uL22_bac/org-type"/>
</dbReference>
<dbReference type="InterPro" id="IPR036394">
    <property type="entry name" value="Ribosomal_uL22_sf"/>
</dbReference>
<dbReference type="NCBIfam" id="TIGR01044">
    <property type="entry name" value="rplV_bact"/>
    <property type="match status" value="1"/>
</dbReference>
<dbReference type="PANTHER" id="PTHR13501">
    <property type="entry name" value="CHLOROPLAST 50S RIBOSOMAL PROTEIN L22-RELATED"/>
    <property type="match status" value="1"/>
</dbReference>
<dbReference type="PANTHER" id="PTHR13501:SF8">
    <property type="entry name" value="LARGE RIBOSOMAL SUBUNIT PROTEIN UL22M"/>
    <property type="match status" value="1"/>
</dbReference>
<dbReference type="Pfam" id="PF00237">
    <property type="entry name" value="Ribosomal_L22"/>
    <property type="match status" value="1"/>
</dbReference>
<dbReference type="SUPFAM" id="SSF54843">
    <property type="entry name" value="Ribosomal protein L22"/>
    <property type="match status" value="1"/>
</dbReference>
<protein>
    <recommendedName>
        <fullName evidence="1">Large ribosomal subunit protein uL22</fullName>
    </recommendedName>
    <alternativeName>
        <fullName evidence="2">50S ribosomal protein L22</fullName>
    </alternativeName>
</protein>
<name>RL22_CHLPD</name>
<comment type="function">
    <text evidence="1">This protein binds specifically to 23S rRNA; its binding is stimulated by other ribosomal proteins, e.g. L4, L17, and L20. It is important during the early stages of 50S assembly. It makes multiple contacts with different domains of the 23S rRNA in the assembled 50S subunit and ribosome (By similarity).</text>
</comment>
<comment type="function">
    <text evidence="1">The globular domain of the protein is located near the polypeptide exit tunnel on the outside of the subunit, while an extended beta-hairpin is found that lines the wall of the exit tunnel in the center of the 70S ribosome.</text>
</comment>
<comment type="subunit">
    <text evidence="1">Part of the 50S ribosomal subunit.</text>
</comment>
<comment type="similarity">
    <text evidence="1">Belongs to the universal ribosomal protein uL22 family.</text>
</comment>